<protein>
    <recommendedName>
        <fullName evidence="6">Large ribosomal subunit protein uL4c</fullName>
    </recommendedName>
    <alternativeName>
        <fullName evidence="5">50S ribosomal protein L4, chloroplastic</fullName>
        <shortName>R-protein L4</shortName>
    </alternativeName>
</protein>
<sequence length="293" mass="32435">MATSTSSSLSLSFFSSSLFSSKSRNFSSKPILKLPSSSHSQTSLSLSIKSELIPLPILNFSGEKVGETFLNLKTAPPEKARAVVHRGLITHLQNKRRGTASTLTRAEVRGGGRKPYPQKKTGRARRGSQGSPLRPGGGVIFGPKPRDWTIKMNKKERRLALSTAIASAVGNSFVVEEFAENFEKPKTKDFIAAMQRWGLDPAEKSLFFLMDLVENVEKSGRNIRTLKLLTPRSLNLFDVLNAEKLVFTEGTIQYLNQRYGVDTLEDEDEEEEEEEEGEEVDDGVEDGTPEPAE</sequence>
<feature type="transit peptide" description="Chloroplast" evidence="2 4">
    <location>
        <begin position="1"/>
        <end position="50"/>
    </location>
</feature>
<feature type="chain" id="PRO_0000030539" description="Large ribosomal subunit protein uL4c">
    <location>
        <begin position="51"/>
        <end position="293"/>
    </location>
</feature>
<feature type="region of interest" description="Disordered" evidence="1">
    <location>
        <begin position="107"/>
        <end position="138"/>
    </location>
</feature>
<feature type="region of interest" description="Disordered" evidence="1">
    <location>
        <begin position="259"/>
        <end position="293"/>
    </location>
</feature>
<feature type="compositionally biased region" description="Basic residues" evidence="1">
    <location>
        <begin position="116"/>
        <end position="126"/>
    </location>
</feature>
<feature type="compositionally biased region" description="Acidic residues" evidence="1">
    <location>
        <begin position="263"/>
        <end position="293"/>
    </location>
</feature>
<feature type="sequence conflict" description="In Ref. 2; KNA22937." evidence="7" ref="2">
    <original>P</original>
    <variation>S</variation>
    <location>
        <position position="77"/>
    </location>
</feature>
<feature type="sequence conflict" description="In Ref. 2; KNA22937." evidence="7" ref="2">
    <original>K</original>
    <variation>T</variation>
    <location>
        <position position="79"/>
    </location>
</feature>
<feature type="sequence conflict" description="In Ref. 2; KNA22937." evidence="7" ref="2">
    <original>G</original>
    <variation>R</variation>
    <location>
        <position position="130"/>
    </location>
</feature>
<feature type="sequence conflict" description="In Ref. 1; CAA63651." evidence="7" ref="1">
    <original>E</original>
    <variation>G</variation>
    <location>
        <position position="274"/>
    </location>
</feature>
<feature type="strand" evidence="11">
    <location>
        <begin position="55"/>
        <end position="58"/>
    </location>
</feature>
<feature type="strand" evidence="11">
    <location>
        <begin position="64"/>
        <end position="68"/>
    </location>
</feature>
<feature type="turn" evidence="11">
    <location>
        <begin position="77"/>
        <end position="79"/>
    </location>
</feature>
<feature type="helix" evidence="11">
    <location>
        <begin position="80"/>
        <end position="94"/>
    </location>
</feature>
<feature type="turn" evidence="11">
    <location>
        <begin position="105"/>
        <end position="107"/>
    </location>
</feature>
<feature type="strand" evidence="12">
    <location>
        <begin position="108"/>
        <end position="110"/>
    </location>
</feature>
<feature type="strand" evidence="11">
    <location>
        <begin position="113"/>
        <end position="115"/>
    </location>
</feature>
<feature type="turn" evidence="11">
    <location>
        <begin position="121"/>
        <end position="123"/>
    </location>
</feature>
<feature type="strand" evidence="11">
    <location>
        <begin position="132"/>
        <end position="134"/>
    </location>
</feature>
<feature type="strand" evidence="12">
    <location>
        <begin position="139"/>
        <end position="141"/>
    </location>
</feature>
<feature type="helix" evidence="11">
    <location>
        <begin position="154"/>
        <end position="167"/>
    </location>
</feature>
<feature type="helix" evidence="11">
    <location>
        <begin position="168"/>
        <end position="170"/>
    </location>
</feature>
<feature type="strand" evidence="11">
    <location>
        <begin position="173"/>
        <end position="175"/>
    </location>
</feature>
<feature type="helix" evidence="11">
    <location>
        <begin position="179"/>
        <end position="181"/>
    </location>
</feature>
<feature type="helix" evidence="11">
    <location>
        <begin position="187"/>
        <end position="196"/>
    </location>
</feature>
<feature type="strand" evidence="12">
    <location>
        <begin position="201"/>
        <end position="203"/>
    </location>
</feature>
<feature type="strand" evidence="11">
    <location>
        <begin position="205"/>
        <end position="208"/>
    </location>
</feature>
<feature type="helix" evidence="11">
    <location>
        <begin position="214"/>
        <end position="221"/>
    </location>
</feature>
<feature type="strand" evidence="11">
    <location>
        <begin position="224"/>
        <end position="229"/>
    </location>
</feature>
<feature type="strand" evidence="11">
    <location>
        <begin position="231"/>
        <end position="233"/>
    </location>
</feature>
<feature type="helix" evidence="11">
    <location>
        <begin position="236"/>
        <end position="241"/>
    </location>
</feature>
<feature type="strand" evidence="11">
    <location>
        <begin position="243"/>
        <end position="248"/>
    </location>
</feature>
<feature type="helix" evidence="11">
    <location>
        <begin position="249"/>
        <end position="258"/>
    </location>
</feature>
<dbReference type="EMBL" id="Y14932">
    <property type="protein sequence ID" value="CAA75149.1"/>
    <property type="molecule type" value="Genomic_DNA"/>
</dbReference>
<dbReference type="EMBL" id="X93160">
    <property type="protein sequence ID" value="CAA63651.1"/>
    <property type="molecule type" value="mRNA"/>
</dbReference>
<dbReference type="EMBL" id="KQ134976">
    <property type="protein sequence ID" value="KNA22937.1"/>
    <property type="molecule type" value="Genomic_DNA"/>
</dbReference>
<dbReference type="PIR" id="T09170">
    <property type="entry name" value="T09170"/>
</dbReference>
<dbReference type="PIR" id="T09171">
    <property type="entry name" value="T09171"/>
</dbReference>
<dbReference type="PDB" id="4V61">
    <property type="method" value="EM"/>
    <property type="resolution" value="9.40 A"/>
    <property type="chains" value="BG=1-293"/>
</dbReference>
<dbReference type="PDB" id="5H1S">
    <property type="method" value="EM"/>
    <property type="resolution" value="3.50 A"/>
    <property type="chains" value="G=51-293"/>
</dbReference>
<dbReference type="PDB" id="5MLC">
    <property type="method" value="EM"/>
    <property type="resolution" value="3.90 A"/>
    <property type="chains" value="F=1-293"/>
</dbReference>
<dbReference type="PDB" id="5MMI">
    <property type="method" value="EM"/>
    <property type="resolution" value="3.25 A"/>
    <property type="chains" value="E=1-293"/>
</dbReference>
<dbReference type="PDB" id="5MMM">
    <property type="method" value="EM"/>
    <property type="resolution" value="3.40 A"/>
    <property type="chains" value="E=1-293"/>
</dbReference>
<dbReference type="PDB" id="5X8P">
    <property type="method" value="EM"/>
    <property type="resolution" value="3.40 A"/>
    <property type="chains" value="E=51-293"/>
</dbReference>
<dbReference type="PDB" id="5X8T">
    <property type="method" value="EM"/>
    <property type="resolution" value="3.30 A"/>
    <property type="chains" value="E=51-293"/>
</dbReference>
<dbReference type="PDB" id="6ERI">
    <property type="method" value="EM"/>
    <property type="resolution" value="3.00 A"/>
    <property type="chains" value="AE=51-262"/>
</dbReference>
<dbReference type="PDBsum" id="4V61"/>
<dbReference type="PDBsum" id="5H1S"/>
<dbReference type="PDBsum" id="5MLC"/>
<dbReference type="PDBsum" id="5MMI"/>
<dbReference type="PDBsum" id="5MMM"/>
<dbReference type="PDBsum" id="5X8P"/>
<dbReference type="PDBsum" id="5X8T"/>
<dbReference type="PDBsum" id="6ERI"/>
<dbReference type="EMDB" id="EMD-3525"/>
<dbReference type="EMDB" id="EMD-3531"/>
<dbReference type="EMDB" id="EMD-3533"/>
<dbReference type="EMDB" id="EMD-3941"/>
<dbReference type="EMDB" id="EMD-6709"/>
<dbReference type="EMDB" id="EMD-6711"/>
<dbReference type="EMDB" id="EMD-9572"/>
<dbReference type="SMR" id="O49937"/>
<dbReference type="IntAct" id="O49937">
    <property type="interactions" value="1"/>
</dbReference>
<dbReference type="STRING" id="3562.O49937"/>
<dbReference type="Proteomes" id="UP001155700">
    <property type="component" value="Unplaced"/>
</dbReference>
<dbReference type="GO" id="GO:0009507">
    <property type="term" value="C:chloroplast"/>
    <property type="evidence" value="ECO:0007669"/>
    <property type="project" value="UniProtKB-SubCell"/>
</dbReference>
<dbReference type="GO" id="GO:1990904">
    <property type="term" value="C:ribonucleoprotein complex"/>
    <property type="evidence" value="ECO:0007669"/>
    <property type="project" value="UniProtKB-KW"/>
</dbReference>
<dbReference type="GO" id="GO:0005840">
    <property type="term" value="C:ribosome"/>
    <property type="evidence" value="ECO:0007669"/>
    <property type="project" value="UniProtKB-KW"/>
</dbReference>
<dbReference type="GO" id="GO:0019843">
    <property type="term" value="F:rRNA binding"/>
    <property type="evidence" value="ECO:0007669"/>
    <property type="project" value="UniProtKB-KW"/>
</dbReference>
<dbReference type="GO" id="GO:0003735">
    <property type="term" value="F:structural constituent of ribosome"/>
    <property type="evidence" value="ECO:0000318"/>
    <property type="project" value="GO_Central"/>
</dbReference>
<dbReference type="GO" id="GO:0006353">
    <property type="term" value="P:DNA-templated transcription termination"/>
    <property type="evidence" value="ECO:0007669"/>
    <property type="project" value="UniProtKB-KW"/>
</dbReference>
<dbReference type="GO" id="GO:0006412">
    <property type="term" value="P:translation"/>
    <property type="evidence" value="ECO:0007669"/>
    <property type="project" value="InterPro"/>
</dbReference>
<dbReference type="FunFam" id="3.40.1370.10:FF:000012">
    <property type="entry name" value="50S ribosomal protein L4"/>
    <property type="match status" value="1"/>
</dbReference>
<dbReference type="Gene3D" id="3.40.1370.10">
    <property type="match status" value="1"/>
</dbReference>
<dbReference type="HAMAP" id="MF_01328_B">
    <property type="entry name" value="Ribosomal_uL4_B"/>
    <property type="match status" value="1"/>
</dbReference>
<dbReference type="InterPro" id="IPR002136">
    <property type="entry name" value="Ribosomal_uL4"/>
</dbReference>
<dbReference type="InterPro" id="IPR013005">
    <property type="entry name" value="Ribosomal_uL4-like"/>
</dbReference>
<dbReference type="InterPro" id="IPR023574">
    <property type="entry name" value="Ribosomal_uL4_dom_sf"/>
</dbReference>
<dbReference type="NCBIfam" id="TIGR03953">
    <property type="entry name" value="rplD_bact"/>
    <property type="match status" value="1"/>
</dbReference>
<dbReference type="PANTHER" id="PTHR10746">
    <property type="entry name" value="50S RIBOSOMAL PROTEIN L4"/>
    <property type="match status" value="1"/>
</dbReference>
<dbReference type="PANTHER" id="PTHR10746:SF17">
    <property type="entry name" value="LARGE RIBOSOMAL SUBUNIT PROTEIN UL4C"/>
    <property type="match status" value="1"/>
</dbReference>
<dbReference type="Pfam" id="PF00573">
    <property type="entry name" value="Ribosomal_L4"/>
    <property type="match status" value="1"/>
</dbReference>
<dbReference type="SUPFAM" id="SSF52166">
    <property type="entry name" value="Ribosomal protein L4"/>
    <property type="match status" value="1"/>
</dbReference>
<keyword id="KW-0002">3D-structure</keyword>
<keyword id="KW-0150">Chloroplast</keyword>
<keyword id="KW-0903">Direct protein sequencing</keyword>
<keyword id="KW-0934">Plastid</keyword>
<keyword id="KW-1185">Reference proteome</keyword>
<keyword id="KW-0687">Ribonucleoprotein</keyword>
<keyword id="KW-0689">Ribosomal protein</keyword>
<keyword id="KW-0694">RNA-binding</keyword>
<keyword id="KW-0699">rRNA-binding</keyword>
<keyword id="KW-0804">Transcription</keyword>
<keyword id="KW-0805">Transcription regulation</keyword>
<keyword id="KW-0806">Transcription termination</keyword>
<keyword id="KW-0809">Transit peptide</keyword>
<organism>
    <name type="scientific">Spinacia oleracea</name>
    <name type="common">Spinach</name>
    <dbReference type="NCBI Taxonomy" id="3562"/>
    <lineage>
        <taxon>Eukaryota</taxon>
        <taxon>Viridiplantae</taxon>
        <taxon>Streptophyta</taxon>
        <taxon>Embryophyta</taxon>
        <taxon>Tracheophyta</taxon>
        <taxon>Spermatophyta</taxon>
        <taxon>Magnoliopsida</taxon>
        <taxon>eudicotyledons</taxon>
        <taxon>Gunneridae</taxon>
        <taxon>Pentapetalae</taxon>
        <taxon>Caryophyllales</taxon>
        <taxon>Chenopodiaceae</taxon>
        <taxon>Chenopodioideae</taxon>
        <taxon>Anserineae</taxon>
        <taxon>Spinacia</taxon>
    </lineage>
</organism>
<comment type="function">
    <text evidence="9 10">Component of the chloroplast ribosome (chloro-ribosome), a dedicated translation machinery responsible for the synthesis of chloroplast genome-encoded proteins, including proteins of the transcription and translation machinery and components of the photosynthetic apparatus.</text>
</comment>
<comment type="subunit">
    <text evidence="2 3">Component of the chloroplast large ribosomal subunit (LSU). Mature 70S chloroplast ribosomes of higher plants consist of a small (30S) and a large (50S) subunit. The 30S small subunit contains 1 molecule of ribosomal RNA (16S rRNA) and 24 different proteins. The 50S large subunit contains 3 rRNA molecules (23S, 5S and 4.5S rRNA) and 33 different proteins.</text>
</comment>
<comment type="subcellular location">
    <subcellularLocation>
        <location evidence="2 3">Plastid</location>
        <location evidence="2 3">Chloroplast</location>
    </subcellularLocation>
</comment>
<comment type="tissue specificity">
    <text evidence="4">Highly expressed in cotyledon and weakly in roots.</text>
</comment>
<comment type="mass spectrometry" mass="27235.0" method="Electrospray" evidence="2"/>
<comment type="miscellaneous">
    <text evidence="8">This protein (expressed without the transit peptide) is able to provoke transcription termination from the spinach chloroplast rDNA operon and the E.coli S10 operon in vitro.</text>
</comment>
<comment type="similarity">
    <text evidence="7">Belongs to the universal ribosomal protein uL4 family.</text>
</comment>
<gene>
    <name type="primary">RPL4</name>
    <name type="ORF">SOVF_029280</name>
</gene>
<name>RK4_SPIOL</name>
<proteinExistence type="evidence at protein level"/>
<reference key="1">
    <citation type="journal article" date="1998" name="J. Biol. Chem.">
        <title>The nuclear RPL4 gene encodes a chloroplast protein that co-purifies with the T7-like transcription complex as well as plastid ribosomes.</title>
        <authorList>
            <person name="Trifa Y."/>
            <person name="Privat I."/>
            <person name="Gagnon J."/>
            <person name="Baeza L."/>
            <person name="Lerbs-Mache S."/>
        </authorList>
    </citation>
    <scope>NUCLEOTIDE SEQUENCE [GENOMIC DNA]</scope>
    <scope>PROTEIN SEQUENCE OF 51-63</scope>
    <scope>TISSUE SPECIFICITY</scope>
    <source>
        <strain>cv. Melody</strain>
        <tissue>Leaf</tissue>
    </source>
</reference>
<reference key="2">
    <citation type="journal article" date="2014" name="Nature">
        <title>The genome of the recently domesticated crop plant sugar beet (Beta vulgaris).</title>
        <authorList>
            <person name="Dohm J.C."/>
            <person name="Minoche A.E."/>
            <person name="Holtgraewe D."/>
            <person name="Capella-Gutierrez S."/>
            <person name="Zakrzewski F."/>
            <person name="Tafer H."/>
            <person name="Rupp O."/>
            <person name="Soerensen T.R."/>
            <person name="Stracke R."/>
            <person name="Reinhardt R."/>
            <person name="Goesmann A."/>
            <person name="Kraft T."/>
            <person name="Schulz B."/>
            <person name="Stadler P.F."/>
            <person name="Schmidt T."/>
            <person name="Gabaldon T."/>
            <person name="Lehrach H."/>
            <person name="Weisshaar B."/>
            <person name="Himmelbauer H."/>
        </authorList>
    </citation>
    <scope>NUCLEOTIDE SEQUENCE [LARGE SCALE GENOMIC DNA]</scope>
    <source>
        <strain>cv. Viroflay</strain>
        <tissue>Leaf</tissue>
    </source>
</reference>
<reference key="3">
    <citation type="journal article" date="2000" name="J. Biol. Chem.">
        <title>The plastid ribosomal proteins. Identification of all the proteins in the 50S subunit of an organelle ribosome (chloroplast).</title>
        <authorList>
            <person name="Yamaguchi K."/>
            <person name="Subramanian A.R."/>
        </authorList>
    </citation>
    <scope>PROTEIN SEQUENCE OF 51-68; 82-86; 98-105; 131-137; 152-158; 211-224 AND 228-235</scope>
    <scope>SUBUNIT</scope>
    <scope>SUBCELLULAR LOCATION</scope>
    <scope>MASS SPECTROMETRY</scope>
    <source>
        <strain>cv. Alwaro</strain>
        <tissue>Leaf</tissue>
    </source>
</reference>
<reference key="4">
    <citation type="journal article" date="2000" name="Mol. Gen. Genet.">
        <title>Extra-ribosomal function(s) of the plastid ribosomal protein L4 in the expression of ribosomal components in spinach.</title>
        <authorList>
            <person name="Trifa Y."/>
            <person name="Lerbs-Mache S."/>
        </authorList>
    </citation>
    <scope>CHARACTERIZATION OF TRANSCRIPTION TERMINATION ON THE SPINACH RRN OPERON</scope>
</reference>
<reference key="5">
    <citation type="journal article" date="2007" name="Proc. Natl. Acad. Sci. U.S.A.">
        <title>Cryo-EM study of the spinach chloroplast ribosome reveals the structural and functional roles of plastid-specific ribosomal proteins.</title>
        <authorList>
            <person name="Sharma M.R."/>
            <person name="Wilson D.N."/>
            <person name="Datta P.P."/>
            <person name="Barat C."/>
            <person name="Schluenzen F."/>
            <person name="Fucini P."/>
            <person name="Agrawal R.K."/>
        </authorList>
    </citation>
    <scope>STRUCTURE BY ELECTRON MICROSCOPY (9.4 ANGSTROMS)</scope>
</reference>
<reference key="6">
    <citation type="journal article" date="2016" name="Sci. Rep.">
        <title>Cryo-EM structure of the large subunit of the spinach chloroplast ribosome.</title>
        <authorList>
            <person name="Ahmed T."/>
            <person name="Yin Z."/>
            <person name="Bhushan S."/>
        </authorList>
    </citation>
    <scope>STRUCTURE BY ELECTRON MICROSCOPY (3.50 ANGSTROMS)</scope>
</reference>
<reference key="7">
    <citation type="journal article" date="2017" name="EMBO J.">
        <title>The complete structure of the chloroplast 70S ribosome in complex with translation factor pY.</title>
        <authorList>
            <person name="Bieri P."/>
            <person name="Leibundgut M."/>
            <person name="Saurer M."/>
            <person name="Boehringer D."/>
            <person name="Ban N."/>
        </authorList>
    </citation>
    <scope>STRUCTURE BY ELECTRON MICROSCOPY (3.25 ANGSTROMS)</scope>
    <scope>SUBUNIT</scope>
    <scope>SUBCELLULAR LOCATION</scope>
</reference>
<evidence type="ECO:0000256" key="1">
    <source>
        <dbReference type="SAM" id="MobiDB-lite"/>
    </source>
</evidence>
<evidence type="ECO:0000269" key="2">
    <source>
    </source>
</evidence>
<evidence type="ECO:0000269" key="3">
    <source>
    </source>
</evidence>
<evidence type="ECO:0000269" key="4">
    <source>
    </source>
</evidence>
<evidence type="ECO:0000303" key="5">
    <source>
    </source>
</evidence>
<evidence type="ECO:0000303" key="6">
    <source>
    </source>
</evidence>
<evidence type="ECO:0000305" key="7"/>
<evidence type="ECO:0000305" key="8">
    <source>
    </source>
</evidence>
<evidence type="ECO:0000305" key="9">
    <source>
    </source>
</evidence>
<evidence type="ECO:0000305" key="10">
    <source>
    </source>
</evidence>
<evidence type="ECO:0007829" key="11">
    <source>
        <dbReference type="PDB" id="5MMI"/>
    </source>
</evidence>
<evidence type="ECO:0007829" key="12">
    <source>
        <dbReference type="PDB" id="5X8T"/>
    </source>
</evidence>
<accession>O49937</accession>
<accession>A0A0K9RVQ9</accession>
<accession>O49938</accession>